<protein>
    <recommendedName>
        <fullName evidence="1">Large ribosomal subunit protein uL5</fullName>
    </recommendedName>
    <alternativeName>
        <fullName evidence="2">50S ribosomal protein L5</fullName>
    </alternativeName>
</protein>
<dbReference type="EMBL" id="CP000910">
    <property type="protein sequence ID" value="ABY23883.1"/>
    <property type="molecule type" value="Genomic_DNA"/>
</dbReference>
<dbReference type="RefSeq" id="WP_012245549.1">
    <property type="nucleotide sequence ID" value="NC_010168.1"/>
</dbReference>
<dbReference type="SMR" id="A9WSU5"/>
<dbReference type="STRING" id="288705.RSal33209_2151"/>
<dbReference type="KEGG" id="rsa:RSal33209_2151"/>
<dbReference type="eggNOG" id="COG0094">
    <property type="taxonomic scope" value="Bacteria"/>
</dbReference>
<dbReference type="HOGENOM" id="CLU_061015_2_1_11"/>
<dbReference type="Proteomes" id="UP000002007">
    <property type="component" value="Chromosome"/>
</dbReference>
<dbReference type="GO" id="GO:1990904">
    <property type="term" value="C:ribonucleoprotein complex"/>
    <property type="evidence" value="ECO:0007669"/>
    <property type="project" value="UniProtKB-KW"/>
</dbReference>
<dbReference type="GO" id="GO:0005840">
    <property type="term" value="C:ribosome"/>
    <property type="evidence" value="ECO:0007669"/>
    <property type="project" value="UniProtKB-KW"/>
</dbReference>
<dbReference type="GO" id="GO:0019843">
    <property type="term" value="F:rRNA binding"/>
    <property type="evidence" value="ECO:0007669"/>
    <property type="project" value="UniProtKB-UniRule"/>
</dbReference>
<dbReference type="GO" id="GO:0003735">
    <property type="term" value="F:structural constituent of ribosome"/>
    <property type="evidence" value="ECO:0007669"/>
    <property type="project" value="InterPro"/>
</dbReference>
<dbReference type="GO" id="GO:0000049">
    <property type="term" value="F:tRNA binding"/>
    <property type="evidence" value="ECO:0007669"/>
    <property type="project" value="UniProtKB-UniRule"/>
</dbReference>
<dbReference type="GO" id="GO:0006412">
    <property type="term" value="P:translation"/>
    <property type="evidence" value="ECO:0007669"/>
    <property type="project" value="UniProtKB-UniRule"/>
</dbReference>
<dbReference type="FunFam" id="3.30.1440.10:FF:000001">
    <property type="entry name" value="50S ribosomal protein L5"/>
    <property type="match status" value="1"/>
</dbReference>
<dbReference type="Gene3D" id="3.30.1440.10">
    <property type="match status" value="1"/>
</dbReference>
<dbReference type="HAMAP" id="MF_01333_B">
    <property type="entry name" value="Ribosomal_uL5_B"/>
    <property type="match status" value="1"/>
</dbReference>
<dbReference type="InterPro" id="IPR002132">
    <property type="entry name" value="Ribosomal_uL5"/>
</dbReference>
<dbReference type="InterPro" id="IPR020930">
    <property type="entry name" value="Ribosomal_uL5_bac-type"/>
</dbReference>
<dbReference type="InterPro" id="IPR031309">
    <property type="entry name" value="Ribosomal_uL5_C"/>
</dbReference>
<dbReference type="InterPro" id="IPR020929">
    <property type="entry name" value="Ribosomal_uL5_CS"/>
</dbReference>
<dbReference type="InterPro" id="IPR022803">
    <property type="entry name" value="Ribosomal_uL5_dom_sf"/>
</dbReference>
<dbReference type="InterPro" id="IPR031310">
    <property type="entry name" value="Ribosomal_uL5_N"/>
</dbReference>
<dbReference type="NCBIfam" id="NF000585">
    <property type="entry name" value="PRK00010.1"/>
    <property type="match status" value="1"/>
</dbReference>
<dbReference type="PANTHER" id="PTHR11994">
    <property type="entry name" value="60S RIBOSOMAL PROTEIN L11-RELATED"/>
    <property type="match status" value="1"/>
</dbReference>
<dbReference type="Pfam" id="PF00281">
    <property type="entry name" value="Ribosomal_L5"/>
    <property type="match status" value="1"/>
</dbReference>
<dbReference type="Pfam" id="PF00673">
    <property type="entry name" value="Ribosomal_L5_C"/>
    <property type="match status" value="1"/>
</dbReference>
<dbReference type="PIRSF" id="PIRSF002161">
    <property type="entry name" value="Ribosomal_L5"/>
    <property type="match status" value="1"/>
</dbReference>
<dbReference type="SUPFAM" id="SSF55282">
    <property type="entry name" value="RL5-like"/>
    <property type="match status" value="1"/>
</dbReference>
<dbReference type="PROSITE" id="PS00358">
    <property type="entry name" value="RIBOSOMAL_L5"/>
    <property type="match status" value="1"/>
</dbReference>
<evidence type="ECO:0000255" key="1">
    <source>
        <dbReference type="HAMAP-Rule" id="MF_01333"/>
    </source>
</evidence>
<evidence type="ECO:0000305" key="2"/>
<comment type="function">
    <text evidence="1">This is one of the proteins that bind and probably mediate the attachment of the 5S RNA into the large ribosomal subunit, where it forms part of the central protuberance. In the 70S ribosome it contacts protein S13 of the 30S subunit (bridge B1b), connecting the 2 subunits; this bridge is implicated in subunit movement. Contacts the P site tRNA; the 5S rRNA and some of its associated proteins might help stabilize positioning of ribosome-bound tRNAs.</text>
</comment>
<comment type="subunit">
    <text evidence="1">Part of the 50S ribosomal subunit; part of the 5S rRNA/L5/L18/L25 subcomplex. Contacts the 5S rRNA and the P site tRNA. Forms a bridge to the 30S subunit in the 70S ribosome.</text>
</comment>
<comment type="similarity">
    <text evidence="1">Belongs to the universal ribosomal protein uL5 family.</text>
</comment>
<reference key="1">
    <citation type="journal article" date="2008" name="J. Bacteriol.">
        <title>Genome sequence of the fish pathogen Renibacterium salmoninarum suggests reductive evolution away from an environmental Arthrobacter ancestor.</title>
        <authorList>
            <person name="Wiens G.D."/>
            <person name="Rockey D.D."/>
            <person name="Wu Z."/>
            <person name="Chang J."/>
            <person name="Levy R."/>
            <person name="Crane S."/>
            <person name="Chen D.S."/>
            <person name="Capri G.R."/>
            <person name="Burnett J.R."/>
            <person name="Sudheesh P.S."/>
            <person name="Schipma M.J."/>
            <person name="Burd H."/>
            <person name="Bhattacharyya A."/>
            <person name="Rhodes L.D."/>
            <person name="Kaul R."/>
            <person name="Strom M.S."/>
        </authorList>
    </citation>
    <scope>NUCLEOTIDE SEQUENCE [LARGE SCALE GENOMIC DNA]</scope>
    <source>
        <strain>ATCC 33209 / DSM 20767 / JCM 11484 / NBRC 15589 / NCIMB 2235</strain>
    </source>
</reference>
<keyword id="KW-1185">Reference proteome</keyword>
<keyword id="KW-0687">Ribonucleoprotein</keyword>
<keyword id="KW-0689">Ribosomal protein</keyword>
<keyword id="KW-0694">RNA-binding</keyword>
<keyword id="KW-0699">rRNA-binding</keyword>
<keyword id="KW-0820">tRNA-binding</keyword>
<gene>
    <name evidence="1" type="primary">rplE</name>
    <name type="ordered locus">RSal33209_2151</name>
</gene>
<organism>
    <name type="scientific">Renibacterium salmoninarum (strain ATCC 33209 / DSM 20767 / JCM 11484 / NBRC 15589 / NCIMB 2235)</name>
    <dbReference type="NCBI Taxonomy" id="288705"/>
    <lineage>
        <taxon>Bacteria</taxon>
        <taxon>Bacillati</taxon>
        <taxon>Actinomycetota</taxon>
        <taxon>Actinomycetes</taxon>
        <taxon>Micrococcales</taxon>
        <taxon>Micrococcaceae</taxon>
        <taxon>Renibacterium</taxon>
    </lineage>
</organism>
<sequence length="193" mass="21593">MSIETSEATVKIAPRLKTRYADEIKKTLQDDFSYVNVNQVPRLVKVVVNMGVGEAARDSKVIDGAVRDLTLITGQKPMVTKARKSIAQFKLREGMPIGAHTTLRGDRMWEFVDRLVTLALPRIRDFRGLSGKQFDGNGNYTFGLTEQVMFHEIDQDAIDKIRGMDITVVTTAKTDDEGRALLKALGFPFKSED</sequence>
<proteinExistence type="inferred from homology"/>
<feature type="chain" id="PRO_1000166143" description="Large ribosomal subunit protein uL5">
    <location>
        <begin position="1"/>
        <end position="193"/>
    </location>
</feature>
<accession>A9WSU5</accession>
<name>RL5_RENSM</name>